<proteinExistence type="evidence at transcript level"/>
<protein>
    <recommendedName>
        <fullName evidence="8">Kinesin-like protein KIN-4C</fullName>
    </recommendedName>
    <alternativeName>
        <fullName evidence="7">AtKINESIN-4C</fullName>
    </alternativeName>
</protein>
<evidence type="ECO:0000250" key="1">
    <source>
        <dbReference type="UniProtKB" id="Q8GS71"/>
    </source>
</evidence>
<evidence type="ECO:0000255" key="2"/>
<evidence type="ECO:0000255" key="3">
    <source>
        <dbReference type="PROSITE-ProRule" id="PRU00283"/>
    </source>
</evidence>
<evidence type="ECO:0000256" key="4">
    <source>
        <dbReference type="SAM" id="MobiDB-lite"/>
    </source>
</evidence>
<evidence type="ECO:0000269" key="5">
    <source>
    </source>
</evidence>
<evidence type="ECO:0000303" key="6">
    <source>
    </source>
</evidence>
<evidence type="ECO:0000303" key="7">
    <source>
    </source>
</evidence>
<evidence type="ECO:0000305" key="8"/>
<evidence type="ECO:0000312" key="9">
    <source>
        <dbReference type="Araport" id="AT5G60930"/>
    </source>
</evidence>
<evidence type="ECO:0000312" key="10">
    <source>
        <dbReference type="EMBL" id="BAB10642.1"/>
    </source>
</evidence>
<keyword id="KW-0067">ATP-binding</keyword>
<keyword id="KW-0961">Cell wall biogenesis/degradation</keyword>
<keyword id="KW-0175">Coiled coil</keyword>
<keyword id="KW-0493">Microtubule</keyword>
<keyword id="KW-0505">Motor protein</keyword>
<keyword id="KW-0547">Nucleotide-binding</keyword>
<keyword id="KW-1185">Reference proteome</keyword>
<gene>
    <name evidence="8" type="primary">KIN4C</name>
    <name evidence="9" type="ordered locus">At5g60930</name>
    <name evidence="10" type="ORF">MSL3.5</name>
</gene>
<dbReference type="EMBL" id="AB008269">
    <property type="protein sequence ID" value="BAB10642.1"/>
    <property type="status" value="ALT_SEQ"/>
    <property type="molecule type" value="Genomic_DNA"/>
</dbReference>
<dbReference type="EMBL" id="CP002688">
    <property type="protein sequence ID" value="AED97398.1"/>
    <property type="status" value="ALT_SEQ"/>
    <property type="molecule type" value="Genomic_DNA"/>
</dbReference>
<dbReference type="EMBL" id="CP002688">
    <property type="protein sequence ID" value="ANM70805.1"/>
    <property type="molecule type" value="Genomic_DNA"/>
</dbReference>
<dbReference type="EMBL" id="AK118373">
    <property type="protein sequence ID" value="BAC42985.1"/>
    <property type="status" value="ALT_TERM"/>
    <property type="molecule type" value="mRNA"/>
</dbReference>
<dbReference type="RefSeq" id="NP_001332385.1">
    <property type="nucleotide sequence ID" value="NM_001345436.1"/>
</dbReference>
<dbReference type="RefSeq" id="NP_001332386.1">
    <property type="nucleotide sequence ID" value="NM_001345437.1"/>
</dbReference>
<dbReference type="RefSeq" id="NP_200901.2">
    <property type="nucleotide sequence ID" value="NM_125486.3"/>
</dbReference>
<dbReference type="SMR" id="F4K0J3"/>
<dbReference type="FunCoup" id="F4K0J3">
    <property type="interactions" value="964"/>
</dbReference>
<dbReference type="STRING" id="3702.F4K0J3"/>
<dbReference type="iPTMnet" id="F4K0J3"/>
<dbReference type="PaxDb" id="3702-AT5G60930.1"/>
<dbReference type="ProteomicsDB" id="237121"/>
<dbReference type="EnsemblPlants" id="AT5G60930.3">
    <property type="protein sequence ID" value="AT5G60930.3"/>
    <property type="gene ID" value="AT5G60930"/>
</dbReference>
<dbReference type="GeneID" id="836214"/>
<dbReference type="Gramene" id="AT5G60930.3">
    <property type="protein sequence ID" value="AT5G60930.3"/>
    <property type="gene ID" value="AT5G60930"/>
</dbReference>
<dbReference type="KEGG" id="ath:AT5G60930"/>
<dbReference type="Araport" id="AT5G60930"/>
<dbReference type="TAIR" id="AT5G60930"/>
<dbReference type="eggNOG" id="KOG0244">
    <property type="taxonomic scope" value="Eukaryota"/>
</dbReference>
<dbReference type="HOGENOM" id="CLU_001485_4_2_1"/>
<dbReference type="InParanoid" id="F4K0J3"/>
<dbReference type="OMA" id="GDMGHTT"/>
<dbReference type="PRO" id="PR:F4K0J3"/>
<dbReference type="Proteomes" id="UP000006548">
    <property type="component" value="Chromosome 5"/>
</dbReference>
<dbReference type="ExpressionAtlas" id="F4K0J3">
    <property type="expression patterns" value="baseline and differential"/>
</dbReference>
<dbReference type="GO" id="GO:0005874">
    <property type="term" value="C:microtubule"/>
    <property type="evidence" value="ECO:0007669"/>
    <property type="project" value="UniProtKB-KW"/>
</dbReference>
<dbReference type="GO" id="GO:0009506">
    <property type="term" value="C:plasmodesma"/>
    <property type="evidence" value="ECO:0007005"/>
    <property type="project" value="TAIR"/>
</dbReference>
<dbReference type="GO" id="GO:0005524">
    <property type="term" value="F:ATP binding"/>
    <property type="evidence" value="ECO:0007669"/>
    <property type="project" value="UniProtKB-KW"/>
</dbReference>
<dbReference type="GO" id="GO:0008017">
    <property type="term" value="F:microtubule binding"/>
    <property type="evidence" value="ECO:0007669"/>
    <property type="project" value="InterPro"/>
</dbReference>
<dbReference type="GO" id="GO:0003777">
    <property type="term" value="F:microtubule motor activity"/>
    <property type="evidence" value="ECO:0007669"/>
    <property type="project" value="InterPro"/>
</dbReference>
<dbReference type="GO" id="GO:0071555">
    <property type="term" value="P:cell wall organization"/>
    <property type="evidence" value="ECO:0007669"/>
    <property type="project" value="UniProtKB-KW"/>
</dbReference>
<dbReference type="GO" id="GO:0007018">
    <property type="term" value="P:microtubule-based movement"/>
    <property type="evidence" value="ECO:0007669"/>
    <property type="project" value="InterPro"/>
</dbReference>
<dbReference type="CDD" id="cd01372">
    <property type="entry name" value="KISc_KIF4"/>
    <property type="match status" value="1"/>
</dbReference>
<dbReference type="FunFam" id="3.40.850.10:FF:000032">
    <property type="entry name" value="kinesin-like protein KIN-4A isoform X1"/>
    <property type="match status" value="1"/>
</dbReference>
<dbReference type="Gene3D" id="3.40.850.10">
    <property type="entry name" value="Kinesin motor domain"/>
    <property type="match status" value="1"/>
</dbReference>
<dbReference type="InterPro" id="IPR027640">
    <property type="entry name" value="Kinesin-like_fam"/>
</dbReference>
<dbReference type="InterPro" id="IPR019821">
    <property type="entry name" value="Kinesin_motor_CS"/>
</dbReference>
<dbReference type="InterPro" id="IPR001752">
    <property type="entry name" value="Kinesin_motor_dom"/>
</dbReference>
<dbReference type="InterPro" id="IPR036961">
    <property type="entry name" value="Kinesin_motor_dom_sf"/>
</dbReference>
<dbReference type="InterPro" id="IPR027417">
    <property type="entry name" value="P-loop_NTPase"/>
</dbReference>
<dbReference type="PANTHER" id="PTHR47969">
    <property type="entry name" value="CHROMOSOME-ASSOCIATED KINESIN KIF4A-RELATED"/>
    <property type="match status" value="1"/>
</dbReference>
<dbReference type="PANTHER" id="PTHR47969:SF6">
    <property type="entry name" value="KINESIN-LIKE PROTEIN KIN-4C"/>
    <property type="match status" value="1"/>
</dbReference>
<dbReference type="Pfam" id="PF00225">
    <property type="entry name" value="Kinesin"/>
    <property type="match status" value="1"/>
</dbReference>
<dbReference type="PRINTS" id="PR00380">
    <property type="entry name" value="KINESINHEAVY"/>
</dbReference>
<dbReference type="SMART" id="SM00129">
    <property type="entry name" value="KISc"/>
    <property type="match status" value="1"/>
</dbReference>
<dbReference type="SUPFAM" id="SSF52540">
    <property type="entry name" value="P-loop containing nucleoside triphosphate hydrolases"/>
    <property type="match status" value="1"/>
</dbReference>
<dbReference type="PROSITE" id="PS00411">
    <property type="entry name" value="KINESIN_MOTOR_1"/>
    <property type="match status" value="1"/>
</dbReference>
<dbReference type="PROSITE" id="PS50067">
    <property type="entry name" value="KINESIN_MOTOR_2"/>
    <property type="match status" value="1"/>
</dbReference>
<feature type="chain" id="PRO_0000436186" description="Kinesin-like protein KIN-4C">
    <location>
        <begin position="1"/>
        <end position="1300"/>
    </location>
</feature>
<feature type="domain" description="Kinesin motor" evidence="3">
    <location>
        <begin position="6"/>
        <end position="360"/>
    </location>
</feature>
<feature type="region of interest" description="Disordered" evidence="4">
    <location>
        <begin position="956"/>
        <end position="1018"/>
    </location>
</feature>
<feature type="region of interest" description="Disordered" evidence="4">
    <location>
        <begin position="1097"/>
        <end position="1132"/>
    </location>
</feature>
<feature type="region of interest" description="Disordered" evidence="4">
    <location>
        <begin position="1144"/>
        <end position="1187"/>
    </location>
</feature>
<feature type="region of interest" description="Disordered" evidence="4">
    <location>
        <begin position="1200"/>
        <end position="1300"/>
    </location>
</feature>
<feature type="coiled-coil region" evidence="2">
    <location>
        <begin position="580"/>
        <end position="615"/>
    </location>
</feature>
<feature type="coiled-coil region" evidence="2">
    <location>
        <begin position="653"/>
        <end position="697"/>
    </location>
</feature>
<feature type="coiled-coil region" evidence="2">
    <location>
        <begin position="781"/>
        <end position="823"/>
    </location>
</feature>
<feature type="compositionally biased region" description="Basic and acidic residues" evidence="4">
    <location>
        <begin position="956"/>
        <end position="971"/>
    </location>
</feature>
<feature type="compositionally biased region" description="Basic and acidic residues" evidence="4">
    <location>
        <begin position="1001"/>
        <end position="1013"/>
    </location>
</feature>
<feature type="compositionally biased region" description="Polar residues" evidence="4">
    <location>
        <begin position="1169"/>
        <end position="1180"/>
    </location>
</feature>
<feature type="compositionally biased region" description="Polar residues" evidence="4">
    <location>
        <begin position="1205"/>
        <end position="1222"/>
    </location>
</feature>
<feature type="compositionally biased region" description="Polar residues" evidence="4">
    <location>
        <begin position="1230"/>
        <end position="1239"/>
    </location>
</feature>
<feature type="compositionally biased region" description="Polar residues" evidence="4">
    <location>
        <begin position="1275"/>
        <end position="1288"/>
    </location>
</feature>
<feature type="compositionally biased region" description="Basic and acidic residues" evidence="4">
    <location>
        <begin position="1289"/>
        <end position="1300"/>
    </location>
</feature>
<feature type="binding site" evidence="3">
    <location>
        <begin position="85"/>
        <end position="92"/>
    </location>
    <ligand>
        <name>ATP</name>
        <dbReference type="ChEBI" id="CHEBI:30616"/>
    </ligand>
</feature>
<feature type="sequence conflict" description="In Ref. 3; BAC42985." evidence="8" ref="3">
    <original>K</original>
    <variation>M</variation>
    <location>
        <position position="627"/>
    </location>
</feature>
<feature type="sequence conflict" description="In Ref. 3; BAC42985." evidence="8" ref="3">
    <original>I</original>
    <variation>IS</variation>
    <location>
        <position position="822"/>
    </location>
</feature>
<feature type="sequence conflict" description="In Ref. 3; BAC42985." evidence="8" ref="3">
    <original>A</original>
    <variation>V</variation>
    <location>
        <position position="1134"/>
    </location>
</feature>
<feature type="sequence conflict" description="In Ref. 3; BAC42985." evidence="8" ref="3">
    <original>T</original>
    <variation>A</variation>
    <location>
        <position position="1190"/>
    </location>
</feature>
<accession>F4K0J3</accession>
<accession>Q8GX87</accession>
<accession>Q9FME7</accession>
<reference key="1">
    <citation type="journal article" date="1997" name="DNA Res.">
        <title>Structural analysis of Arabidopsis thaliana chromosome 5. III. Sequence features of the regions of 1,191,918 bp covered by seventeen physically assigned P1 clones.</title>
        <authorList>
            <person name="Nakamura Y."/>
            <person name="Sato S."/>
            <person name="Kaneko T."/>
            <person name="Kotani H."/>
            <person name="Asamizu E."/>
            <person name="Miyajima N."/>
            <person name="Tabata S."/>
        </authorList>
    </citation>
    <scope>NUCLEOTIDE SEQUENCE [LARGE SCALE GENOMIC DNA]</scope>
    <source>
        <strain>cv. Columbia</strain>
    </source>
</reference>
<reference key="2">
    <citation type="journal article" date="2017" name="Plant J.">
        <title>Araport11: a complete reannotation of the Arabidopsis thaliana reference genome.</title>
        <authorList>
            <person name="Cheng C.Y."/>
            <person name="Krishnakumar V."/>
            <person name="Chan A.P."/>
            <person name="Thibaud-Nissen F."/>
            <person name="Schobel S."/>
            <person name="Town C.D."/>
        </authorList>
    </citation>
    <scope>GENOME REANNOTATION</scope>
    <source>
        <strain>cv. Columbia</strain>
    </source>
</reference>
<reference key="3">
    <citation type="journal article" date="2002" name="Science">
        <title>Functional annotation of a full-length Arabidopsis cDNA collection.</title>
        <authorList>
            <person name="Seki M."/>
            <person name="Narusaka M."/>
            <person name="Kamiya A."/>
            <person name="Ishida J."/>
            <person name="Satou M."/>
            <person name="Sakurai T."/>
            <person name="Nakajima M."/>
            <person name="Enju A."/>
            <person name="Akiyama K."/>
            <person name="Oono Y."/>
            <person name="Muramatsu M."/>
            <person name="Hayashizaki Y."/>
            <person name="Kawai J."/>
            <person name="Carninci P."/>
            <person name="Itoh M."/>
            <person name="Ishii Y."/>
            <person name="Arakawa T."/>
            <person name="Shibata K."/>
            <person name="Shinagawa A."/>
            <person name="Shinozaki K."/>
        </authorList>
    </citation>
    <scope>NUCLEOTIDE SEQUENCE [LARGE SCALE MRNA] OF 627-1300</scope>
    <source>
        <strain>cv. Columbia</strain>
    </source>
</reference>
<reference key="4">
    <citation type="journal article" date="2001" name="BMC Genomics">
        <title>Kinesins in the Arabidopsis genome: a comparative analysis among eukaryotes.</title>
        <authorList>
            <person name="Reddy A.S."/>
            <person name="Day I.S."/>
        </authorList>
    </citation>
    <scope>GENE FAMILY</scope>
</reference>
<reference key="5">
    <citation type="journal article" date="2006" name="BMC Genomics">
        <title>Comprehensive comparative analysis of kinesins in photosynthetic eukaryotes.</title>
        <authorList>
            <person name="Richardson D.N."/>
            <person name="Simmons M.P."/>
            <person name="Reddy A.S."/>
        </authorList>
    </citation>
    <scope>GENE FAMILY</scope>
    <scope>NOMENCLATURE</scope>
</reference>
<reference key="6">
    <citation type="journal article" date="2012" name="Protoplasma">
        <title>Functions of the Arabidopsis kinesin superfamily of microtubule-based motor proteins.</title>
        <authorList>
            <person name="Zhu C."/>
            <person name="Dixit R."/>
        </authorList>
    </citation>
    <scope>REVIEW</scope>
</reference>
<reference key="7">
    <citation type="journal article" date="2015" name="Mol. Plant">
        <title>Kinesin-4 functions in vesicular transport on cortical microtubules and regulates cell wall mechanics during cell elongation in plants.</title>
        <authorList>
            <person name="Kong Z."/>
            <person name="Ioki M."/>
            <person name="Braybrook S."/>
            <person name="Li S."/>
            <person name="Ye Z.H."/>
            <person name="Julie Lee Y.R."/>
            <person name="Hotta T."/>
            <person name="Chang A."/>
            <person name="Tian J."/>
            <person name="Wang G."/>
            <person name="Liu B."/>
        </authorList>
    </citation>
    <scope>IDENTIFICATION</scope>
    <scope>DISRUPTION PHENOTYPE</scope>
</reference>
<name>KN4C_ARATH</name>
<organism>
    <name type="scientific">Arabidopsis thaliana</name>
    <name type="common">Mouse-ear cress</name>
    <dbReference type="NCBI Taxonomy" id="3702"/>
    <lineage>
        <taxon>Eukaryota</taxon>
        <taxon>Viridiplantae</taxon>
        <taxon>Streptophyta</taxon>
        <taxon>Embryophyta</taxon>
        <taxon>Tracheophyta</taxon>
        <taxon>Spermatophyta</taxon>
        <taxon>Magnoliopsida</taxon>
        <taxon>eudicotyledons</taxon>
        <taxon>Gunneridae</taxon>
        <taxon>Pentapetalae</taxon>
        <taxon>rosids</taxon>
        <taxon>malvids</taxon>
        <taxon>Brassicales</taxon>
        <taxon>Brassicaceae</taxon>
        <taxon>Camelineae</taxon>
        <taxon>Arabidopsis</taxon>
    </lineage>
</organism>
<comment type="function">
    <text evidence="1">Kinesin-like motor protein involved in the control of the oriented deposition of cellulose microfibrils.</text>
</comment>
<comment type="subunit">
    <text evidence="1">Homodimer.</text>
</comment>
<comment type="domain">
    <text evidence="1">Composed of an N-terminal domain which is responsible for the motor activity of kinesin (it hydrolyzes ATP and binds microtubule) and a central to C-terminal alpha-helical coiled coil domain that mediates the heavy chain dimerization.</text>
</comment>
<comment type="disruption phenotype">
    <text evidence="5">No visible phenotype.</text>
</comment>
<comment type="similarity">
    <text evidence="6">Belongs to the TRAFAC class myosin-kinesin ATPase superfamily. Kinesin family. KIN-4 subfamily.</text>
</comment>
<comment type="sequence caution" evidence="8">
    <conflict type="erroneous gene model prediction">
        <sequence resource="EMBL-CDS" id="AED97398"/>
    </conflict>
</comment>
<comment type="sequence caution" evidence="8">
    <conflict type="erroneous gene model prediction">
        <sequence resource="EMBL-CDS" id="BAB10642"/>
    </conflict>
</comment>
<comment type="sequence caution" evidence="8">
    <conflict type="erroneous termination">
        <sequence resource="EMBL-CDS" id="BAC42985"/>
    </conflict>
    <text>Truncated C-terminus.</text>
</comment>
<sequence>MESTECVRVAVNIRPLITPELLNGCTDCITVAPKEPQVHIGSHTFTYDFVYGNGGYPCSEIYNHCVAPLVDALFKGYNATVLAYGQTGSGKTYTMGTNYSGDCTNGGVIPNVMEDIFRRVETTKDSSELLIRVSFIEIFKEEVFDLLDSNSSALLKNDSGVQAKHTALSRAPIQIRETASGGITLAGVTEAEVKTKEEMGSFLARGSLSRATGSTNMNSQSSRSHAIFTITLEQKKIAGGSCTTTEDGGEDILCAKLHLVDLAGSERAKRTGADGMRLKEGIHINKGLLALGNVISALGDEKKRKEGGHVPYRDSKLTRLLQDSLGGNSKTVMIACVSPADTNAEETLNTLKYANRARNIQNKAVINRDPATAQMQRMRSQIEQLQTELLFYRGDSGAFDELQILKHKISLLEASNRELHNELQERRVASEHFSKRAYDAQVEKDKLIMIIESVRNGKSLDEIESCQNEDVGLVNKYVSKIQELEGELLHIKNLKKTSNHQYSDDSYDVGPRSNNVLFPSSNESSDCEDKVMDVTDELEFQEKEIEHCSLQEKLDMELKELDKRLEEKEAEMKRFSSGGTSVLKQHYEKKVYDLEQEKRALQREIEGLRHNLASIPSGPGDGAQKLKEEYVQKLNTLETQVSVLKKKQDAQAQLMRQKQKSDDAAIKLQDEIHRIKSQKVQLQQKIKQESEQFRAWKASREKEVMQLKKEGRRNEYEMHKLMALNQKQKLVLQRKTEEASQVTKRLKELLDNRKASSRETLSGANGPGTQALMQAIEHEIEVTVRVHEVRSEYERQTEERARMAKEVARLREENELLKNAKISVHGDTMSPGARNSRIFALENMLATSSSTLVSMASQLSEAEERERVFGGRGRWNQVRTLGDAKSIMNYLFNLASTARCLARDKEADCREKDVLIRDLKEKIVKFSSYVRYMEIQKADLVHQVKAQTSAMKKLSADENLKNEHSMKKQETRNSTIVLEDMDTSDSEASDHEREDPDLDDEWKPEHESERESEQESVIKLNRKRNFKVGRRRSSVVMRRSYEENSETPSDDAVKSDVCCCTCSKSSSCKTMKCQCRATKGSCGPSCGCSSVKCSNRNADGKENNSISESEALENGENSQESDEKDKGQQQQVLASRGAMLLQNALADKPEEETNDDGGTRRRRKPLSDIGNTTGKSNVPRPSQRKKWKKTVLQLVPVGPPALPPTHTNTHLIPEANSVTVDSDTARMPENSDSGESNSIKLKLPRAMRSASSNGSNLLRERNADQNGSESGGNSGFVQSNSGRASGSRTSDEKENHTRRV</sequence>